<comment type="function">
    <text evidence="2">Component of the coat protein complex II (COPII) which promotes the formation of transport vesicles from the endoplasmic reticulum (ER). The coat has two main functions, the physical deformation of the endoplasmic reticulum membrane into vesicles and the selection of cargo molecules. It also functions as a component of the nuclear pore complex (NPC). NPC components, collectively referred to as nucleoporins (NUPs), can play the role of both NPC structural components and of docking or interaction partners for transiently associated nuclear transport factors. SEC13 is required for efficient mRNA export from the nucleus to the cytoplasm and for correct nuclear pore biogenesis and distribution (By similarity).</text>
</comment>
<comment type="subunit">
    <text evidence="2">The COPII coat is composed of at least 5 proteins: the SEC23/24 complex, the SEC13/31 complex, and the protein SAR1. Component of the nuclear pore complex (NPC). NPC constitutes the exclusive means of nucleocytoplasmic transport. NPCs allow the passive diffusion of ions and small molecules and the active, nuclear transport receptor-mediated bidirectional transport of macromolecules such as proteins, RNAs, ribonucleoparticles (RNPs), and ribosomal subunits across the nuclear envelope. Due to its 8-fold rotational symmetry, all subunits are present with 8 copies or multiples thereof.</text>
</comment>
<comment type="subcellular location">
    <subcellularLocation>
        <location evidence="1">Cytoplasmic vesicle</location>
        <location evidence="1">COPII-coated vesicle membrane</location>
        <topology evidence="1">Peripheral membrane protein</topology>
        <orientation evidence="1">Cytoplasmic side</orientation>
    </subcellularLocation>
    <subcellularLocation>
        <location evidence="1">Endoplasmic reticulum membrane</location>
        <topology evidence="1">Peripheral membrane protein</topology>
        <orientation evidence="1">Cytoplasmic side</orientation>
    </subcellularLocation>
    <subcellularLocation>
        <location evidence="2">Nucleus</location>
        <location evidence="2">Nuclear pore complex</location>
    </subcellularLocation>
</comment>
<comment type="similarity">
    <text evidence="3">Belongs to the WD repeat SEC13 family.</text>
</comment>
<protein>
    <recommendedName>
        <fullName>Protein transport protein SEC13</fullName>
    </recommendedName>
</protein>
<gene>
    <name type="primary">SEC13</name>
    <name type="ordered locus">CNI03320</name>
</gene>
<accession>P0CS50</accession>
<accession>Q55MW6</accession>
<accession>Q5KB95</accession>
<reference key="1">
    <citation type="journal article" date="2005" name="Science">
        <title>The genome of the basidiomycetous yeast and human pathogen Cryptococcus neoformans.</title>
        <authorList>
            <person name="Loftus B.J."/>
            <person name="Fung E."/>
            <person name="Roncaglia P."/>
            <person name="Rowley D."/>
            <person name="Amedeo P."/>
            <person name="Bruno D."/>
            <person name="Vamathevan J."/>
            <person name="Miranda M."/>
            <person name="Anderson I.J."/>
            <person name="Fraser J.A."/>
            <person name="Allen J.E."/>
            <person name="Bosdet I.E."/>
            <person name="Brent M.R."/>
            <person name="Chiu R."/>
            <person name="Doering T.L."/>
            <person name="Donlin M.J."/>
            <person name="D'Souza C.A."/>
            <person name="Fox D.S."/>
            <person name="Grinberg V."/>
            <person name="Fu J."/>
            <person name="Fukushima M."/>
            <person name="Haas B.J."/>
            <person name="Huang J.C."/>
            <person name="Janbon G."/>
            <person name="Jones S.J.M."/>
            <person name="Koo H.L."/>
            <person name="Krzywinski M.I."/>
            <person name="Kwon-Chung K.J."/>
            <person name="Lengeler K.B."/>
            <person name="Maiti R."/>
            <person name="Marra M.A."/>
            <person name="Marra R.E."/>
            <person name="Mathewson C.A."/>
            <person name="Mitchell T.G."/>
            <person name="Pertea M."/>
            <person name="Riggs F.R."/>
            <person name="Salzberg S.L."/>
            <person name="Schein J.E."/>
            <person name="Shvartsbeyn A."/>
            <person name="Shin H."/>
            <person name="Shumway M."/>
            <person name="Specht C.A."/>
            <person name="Suh B.B."/>
            <person name="Tenney A."/>
            <person name="Utterback T.R."/>
            <person name="Wickes B.L."/>
            <person name="Wortman J.R."/>
            <person name="Wye N.H."/>
            <person name="Kronstad J.W."/>
            <person name="Lodge J.K."/>
            <person name="Heitman J."/>
            <person name="Davis R.W."/>
            <person name="Fraser C.M."/>
            <person name="Hyman R.W."/>
        </authorList>
    </citation>
    <scope>NUCLEOTIDE SEQUENCE [LARGE SCALE GENOMIC DNA]</scope>
    <source>
        <strain>JEC21 / ATCC MYA-565</strain>
    </source>
</reference>
<keyword id="KW-0968">Cytoplasmic vesicle</keyword>
<keyword id="KW-0256">Endoplasmic reticulum</keyword>
<keyword id="KW-0931">ER-Golgi transport</keyword>
<keyword id="KW-0472">Membrane</keyword>
<keyword id="KW-0509">mRNA transport</keyword>
<keyword id="KW-0906">Nuclear pore complex</keyword>
<keyword id="KW-0539">Nucleus</keyword>
<keyword id="KW-0653">Protein transport</keyword>
<keyword id="KW-1185">Reference proteome</keyword>
<keyword id="KW-0677">Repeat</keyword>
<keyword id="KW-0811">Translocation</keyword>
<keyword id="KW-0813">Transport</keyword>
<keyword id="KW-0853">WD repeat</keyword>
<feature type="chain" id="PRO_0000295413" description="Protein transport protein SEC13">
    <location>
        <begin position="1"/>
        <end position="332"/>
    </location>
</feature>
<feature type="repeat" description="WD 1">
    <location>
        <begin position="14"/>
        <end position="53"/>
    </location>
</feature>
<feature type="repeat" description="WD 2">
    <location>
        <begin position="59"/>
        <end position="100"/>
    </location>
</feature>
<feature type="repeat" description="WD 3">
    <location>
        <begin position="117"/>
        <end position="158"/>
    </location>
</feature>
<feature type="repeat" description="WD 4">
    <location>
        <begin position="163"/>
        <end position="222"/>
    </location>
</feature>
<feature type="repeat" description="WD 5">
    <location>
        <begin position="229"/>
        <end position="272"/>
    </location>
</feature>
<feature type="repeat" description="WD 6">
    <location>
        <begin position="287"/>
        <end position="326"/>
    </location>
</feature>
<sequence length="332" mass="35969">MSAQASKPVPVETQHEDMIHDAQLDYYGKRLATCSSDRTIRIFNVIKGEAKGEPVILKGHTAAVWQVSWAHPSFGSILASCSYDGRVFIWKEVGQGQGKGSGGELQDGWERIKEHTLHTASVNSIAWAPYDLGPILACASSDGKVSVLSFQNDGSIEVNIFPAHGTGANAISWAPSVLSTVSGVSRSQQPSNSLAPQKRFVTAGSDNLIRIWGFDEEQKKWTEEETIKGHEDWVRDVAWAPNIGLPGMYIASASQDRTVLIHSRPSPSSSWTSAPLLPSLPQSQDPHFPDAVWRVSWSLAGNVLAVSCGDGKVSLWKEGVGKGWECVSDFSS</sequence>
<name>SEC13_CRYNJ</name>
<dbReference type="EMBL" id="AE017349">
    <property type="protein sequence ID" value="AAW45320.2"/>
    <property type="molecule type" value="Genomic_DNA"/>
</dbReference>
<dbReference type="RefSeq" id="XP_572627.1">
    <property type="nucleotide sequence ID" value="XM_572627.1"/>
</dbReference>
<dbReference type="SMR" id="P0CS50"/>
<dbReference type="FunCoup" id="P0CS50">
    <property type="interactions" value="658"/>
</dbReference>
<dbReference type="STRING" id="214684.P0CS50"/>
<dbReference type="PaxDb" id="214684-P0CS50"/>
<dbReference type="eggNOG" id="KOG1332">
    <property type="taxonomic scope" value="Eukaryota"/>
</dbReference>
<dbReference type="HOGENOM" id="CLU_032441_0_0_1"/>
<dbReference type="InParanoid" id="P0CS50"/>
<dbReference type="Proteomes" id="UP000002149">
    <property type="component" value="Chromosome 9"/>
</dbReference>
<dbReference type="GO" id="GO:0030127">
    <property type="term" value="C:COPII vesicle coat"/>
    <property type="evidence" value="ECO:0000318"/>
    <property type="project" value="GO_Central"/>
</dbReference>
<dbReference type="GO" id="GO:0005789">
    <property type="term" value="C:endoplasmic reticulum membrane"/>
    <property type="evidence" value="ECO:0007669"/>
    <property type="project" value="UniProtKB-SubCell"/>
</dbReference>
<dbReference type="GO" id="GO:0031080">
    <property type="term" value="C:nuclear pore outer ring"/>
    <property type="evidence" value="ECO:0000318"/>
    <property type="project" value="GO_Central"/>
</dbReference>
<dbReference type="GO" id="GO:0005198">
    <property type="term" value="F:structural molecule activity"/>
    <property type="evidence" value="ECO:0000318"/>
    <property type="project" value="GO_Central"/>
</dbReference>
<dbReference type="GO" id="GO:0090114">
    <property type="term" value="P:COPII-coated vesicle budding"/>
    <property type="evidence" value="ECO:0000318"/>
    <property type="project" value="GO_Central"/>
</dbReference>
<dbReference type="GO" id="GO:0051028">
    <property type="term" value="P:mRNA transport"/>
    <property type="evidence" value="ECO:0007669"/>
    <property type="project" value="UniProtKB-KW"/>
</dbReference>
<dbReference type="GO" id="GO:0032008">
    <property type="term" value="P:positive regulation of TOR signaling"/>
    <property type="evidence" value="ECO:0000318"/>
    <property type="project" value="GO_Central"/>
</dbReference>
<dbReference type="GO" id="GO:0032527">
    <property type="term" value="P:protein exit from endoplasmic reticulum"/>
    <property type="evidence" value="ECO:0000318"/>
    <property type="project" value="GO_Central"/>
</dbReference>
<dbReference type="GO" id="GO:0006606">
    <property type="term" value="P:protein import into nucleus"/>
    <property type="evidence" value="ECO:0000318"/>
    <property type="project" value="GO_Central"/>
</dbReference>
<dbReference type="FunFam" id="2.130.10.10:FF:001182">
    <property type="entry name" value="Unplaced genomic scaffold supercont1.58, whole genome shotgun sequence"/>
    <property type="match status" value="1"/>
</dbReference>
<dbReference type="Gene3D" id="2.130.10.10">
    <property type="entry name" value="YVTN repeat-like/Quinoprotein amine dehydrogenase"/>
    <property type="match status" value="1"/>
</dbReference>
<dbReference type="InterPro" id="IPR037363">
    <property type="entry name" value="Sec13/Seh1_fam"/>
</dbReference>
<dbReference type="InterPro" id="IPR015943">
    <property type="entry name" value="WD40/YVTN_repeat-like_dom_sf"/>
</dbReference>
<dbReference type="InterPro" id="IPR036322">
    <property type="entry name" value="WD40_repeat_dom_sf"/>
</dbReference>
<dbReference type="InterPro" id="IPR001680">
    <property type="entry name" value="WD40_rpt"/>
</dbReference>
<dbReference type="PANTHER" id="PTHR11024">
    <property type="entry name" value="NUCLEAR PORE COMPLEX PROTEIN SEC13 / SEH1 FAMILY MEMBER"/>
    <property type="match status" value="1"/>
</dbReference>
<dbReference type="PANTHER" id="PTHR11024:SF2">
    <property type="entry name" value="PROTEIN SEC13 HOMOLOG"/>
    <property type="match status" value="1"/>
</dbReference>
<dbReference type="Pfam" id="PF00400">
    <property type="entry name" value="WD40"/>
    <property type="match status" value="5"/>
</dbReference>
<dbReference type="SMART" id="SM00320">
    <property type="entry name" value="WD40"/>
    <property type="match status" value="6"/>
</dbReference>
<dbReference type="SUPFAM" id="SSF50978">
    <property type="entry name" value="WD40 repeat-like"/>
    <property type="match status" value="1"/>
</dbReference>
<dbReference type="PROSITE" id="PS50082">
    <property type="entry name" value="WD_REPEATS_2"/>
    <property type="match status" value="1"/>
</dbReference>
<dbReference type="PROSITE" id="PS50294">
    <property type="entry name" value="WD_REPEATS_REGION"/>
    <property type="match status" value="1"/>
</dbReference>
<proteinExistence type="inferred from homology"/>
<evidence type="ECO:0000250" key="1"/>
<evidence type="ECO:0000250" key="2">
    <source>
        <dbReference type="UniProtKB" id="Q04491"/>
    </source>
</evidence>
<evidence type="ECO:0000305" key="3"/>
<organism>
    <name type="scientific">Cryptococcus neoformans var. neoformans serotype D (strain JEC21 / ATCC MYA-565)</name>
    <name type="common">Filobasidiella neoformans</name>
    <dbReference type="NCBI Taxonomy" id="214684"/>
    <lineage>
        <taxon>Eukaryota</taxon>
        <taxon>Fungi</taxon>
        <taxon>Dikarya</taxon>
        <taxon>Basidiomycota</taxon>
        <taxon>Agaricomycotina</taxon>
        <taxon>Tremellomycetes</taxon>
        <taxon>Tremellales</taxon>
        <taxon>Cryptococcaceae</taxon>
        <taxon>Cryptococcus</taxon>
        <taxon>Cryptococcus neoformans species complex</taxon>
    </lineage>
</organism>